<proteinExistence type="evidence at protein level"/>
<feature type="chain" id="PRO_0000219257" description="Tetraspanin-12">
    <location>
        <begin position="1"/>
        <end position="305"/>
    </location>
</feature>
<feature type="topological domain" description="Cytoplasmic" evidence="2">
    <location>
        <begin position="1"/>
        <end position="12"/>
    </location>
</feature>
<feature type="transmembrane region" description="Helical" evidence="2">
    <location>
        <begin position="13"/>
        <end position="33"/>
    </location>
</feature>
<feature type="topological domain" description="Extracellular" evidence="2">
    <location>
        <begin position="34"/>
        <end position="59"/>
    </location>
</feature>
<feature type="transmembrane region" description="Helical" evidence="2">
    <location>
        <begin position="60"/>
        <end position="80"/>
    </location>
</feature>
<feature type="topological domain" description="Cytoplasmic" evidence="2">
    <location>
        <begin position="81"/>
        <end position="89"/>
    </location>
</feature>
<feature type="transmembrane region" description="Helical" evidence="2">
    <location>
        <begin position="90"/>
        <end position="110"/>
    </location>
</feature>
<feature type="topological domain" description="Extracellular" evidence="2">
    <location>
        <begin position="111"/>
        <end position="224"/>
    </location>
</feature>
<feature type="transmembrane region" description="Helical" evidence="2">
    <location>
        <begin position="225"/>
        <end position="245"/>
    </location>
</feature>
<feature type="topological domain" description="Cytoplasmic" evidence="2">
    <location>
        <begin position="246"/>
        <end position="305"/>
    </location>
</feature>
<feature type="lipid moiety-binding region" description="S-palmitoyl cysteine" evidence="1">
    <location>
        <position position="9"/>
    </location>
</feature>
<feature type="lipid moiety-binding region" description="S-palmitoyl cysteine" evidence="1">
    <location>
        <position position="12"/>
    </location>
</feature>
<feature type="lipid moiety-binding region" description="S-palmitoyl cysteine" evidence="1">
    <location>
        <position position="83"/>
    </location>
</feature>
<feature type="splice variant" id="VSP_038525" description="In isoform 2." evidence="9">
    <original>MAREDSVKCLRCLLYALNLLFWLMSISVLAVSAWMRDYLNNVLTLTAETRVEEAVILTYFPVVHPVMIAVCCFLIIVGMLGYCGTVKRNLLLLAWYFGSLLVIFCVELACGVWTYEQELM</original>
    <variation>MAHKLLL</variation>
    <location>
        <begin position="1"/>
        <end position="120"/>
    </location>
</feature>
<feature type="sequence variant" id="VAR_068899" description="In EVR5; dbSNP:rs538591733." evidence="8">
    <original>T</original>
    <variation>M</variation>
    <location>
        <position position="49"/>
    </location>
</feature>
<feature type="sequence variant" id="VAR_062253" description="In dbSNP:rs17852934." evidence="3">
    <original>L</original>
    <variation>S</variation>
    <location>
        <position position="57"/>
    </location>
</feature>
<feature type="sequence variant" id="VAR_063576" description="In EVR5; dbSNP:rs267607152." evidence="7">
    <original>L</original>
    <variation>H</variation>
    <location>
        <position position="101"/>
    </location>
</feature>
<feature type="sequence variant" id="VAR_068900" description="In EVR5; dbSNP:rs587777283." evidence="8">
    <original>Y</original>
    <variation>C</variation>
    <location>
        <position position="138"/>
    </location>
</feature>
<feature type="sequence variant" id="VAR_063577" description="In EVR5; dbSNP:rs267607151." evidence="6">
    <original>G</original>
    <variation>R</variation>
    <location>
        <position position="188"/>
    </location>
</feature>
<feature type="sequence variant" id="VAR_063578" description="In EVR5." evidence="7">
    <original>M</original>
    <variation>R</variation>
    <location>
        <position position="210"/>
    </location>
</feature>
<feature type="sequence variant" id="VAR_068901" description="In EVR5." evidence="8">
    <original>L</original>
    <variation>P</variation>
    <location>
        <position position="223"/>
    </location>
</feature>
<feature type="sequence variant" id="VAR_063579" description="In EVR5; dbSNP:rs267607154." evidence="6">
    <original>A</original>
    <variation>P</variation>
    <location>
        <position position="237"/>
    </location>
</feature>
<feature type="mutagenesis site" description="Impairs interaction with ADAM10; when associated with S-12 and S-83." evidence="5">
    <original>C</original>
    <variation>S</variation>
    <location>
        <position position="9"/>
    </location>
</feature>
<feature type="mutagenesis site" description="Impairs interaction with ADAM10; when associated with S-9 and S-83." evidence="5">
    <original>C</original>
    <variation>S</variation>
    <location>
        <position position="12"/>
    </location>
</feature>
<feature type="mutagenesis site" description="Impairs interaction with ADAM10; when associated with S-9 and S-12." evidence="5">
    <original>C</original>
    <variation>S</variation>
    <location>
        <position position="83"/>
    </location>
</feature>
<protein>
    <recommendedName>
        <fullName>Tetraspanin-12</fullName>
        <shortName>Tspan-12</shortName>
    </recommendedName>
    <alternativeName>
        <fullName>Tetraspan NET-2</fullName>
    </alternativeName>
    <alternativeName>
        <fullName>Transmembrane 4 superfamily member 12</fullName>
    </alternativeName>
</protein>
<accession>O95859</accession>
<accession>A4D0V8</accession>
<accession>B4DRG6</accession>
<accession>Q549U9</accession>
<accession>Q8N5Y0</accession>
<keyword id="KW-0025">Alternative splicing</keyword>
<keyword id="KW-0037">Angiogenesis</keyword>
<keyword id="KW-1003">Cell membrane</keyword>
<keyword id="KW-0225">Disease variant</keyword>
<keyword id="KW-0449">Lipoprotein</keyword>
<keyword id="KW-0472">Membrane</keyword>
<keyword id="KW-0564">Palmitate</keyword>
<keyword id="KW-1267">Proteomics identification</keyword>
<keyword id="KW-1185">Reference proteome</keyword>
<keyword id="KW-0812">Transmembrane</keyword>
<keyword id="KW-1133">Transmembrane helix</keyword>
<reference key="1">
    <citation type="journal article" date="2000" name="Biochim. Biophys. Acta">
        <title>Sequence and expression of seven new tetraspans.</title>
        <authorList>
            <person name="Serru V."/>
            <person name="Dessen P."/>
            <person name="Boucheix C."/>
            <person name="Rubinstein E."/>
        </authorList>
    </citation>
    <scope>NUCLEOTIDE SEQUENCE [MRNA] (ISOFORM 1)</scope>
</reference>
<reference key="2">
    <citation type="journal article" date="2003" name="Genome Res.">
        <title>The secreted protein discovery initiative (SPDI), a large-scale effort to identify novel human secreted and transmembrane proteins: a bioinformatics assessment.</title>
        <authorList>
            <person name="Clark H.F."/>
            <person name="Gurney A.L."/>
            <person name="Abaya E."/>
            <person name="Baker K."/>
            <person name="Baldwin D.T."/>
            <person name="Brush J."/>
            <person name="Chen J."/>
            <person name="Chow B."/>
            <person name="Chui C."/>
            <person name="Crowley C."/>
            <person name="Currell B."/>
            <person name="Deuel B."/>
            <person name="Dowd P."/>
            <person name="Eaton D."/>
            <person name="Foster J.S."/>
            <person name="Grimaldi C."/>
            <person name="Gu Q."/>
            <person name="Hass P.E."/>
            <person name="Heldens S."/>
            <person name="Huang A."/>
            <person name="Kim H.S."/>
            <person name="Klimowski L."/>
            <person name="Jin Y."/>
            <person name="Johnson S."/>
            <person name="Lee J."/>
            <person name="Lewis L."/>
            <person name="Liao D."/>
            <person name="Mark M.R."/>
            <person name="Robbie E."/>
            <person name="Sanchez C."/>
            <person name="Schoenfeld J."/>
            <person name="Seshagiri S."/>
            <person name="Simmons L."/>
            <person name="Singh J."/>
            <person name="Smith V."/>
            <person name="Stinson J."/>
            <person name="Vagts A."/>
            <person name="Vandlen R.L."/>
            <person name="Watanabe C."/>
            <person name="Wieand D."/>
            <person name="Woods K."/>
            <person name="Xie M.-H."/>
            <person name="Yansura D.G."/>
            <person name="Yi S."/>
            <person name="Yu G."/>
            <person name="Yuan J."/>
            <person name="Zhang M."/>
            <person name="Zhang Z."/>
            <person name="Goddard A.D."/>
            <person name="Wood W.I."/>
            <person name="Godowski P.J."/>
            <person name="Gray A.M."/>
        </authorList>
    </citation>
    <scope>NUCLEOTIDE SEQUENCE [LARGE SCALE MRNA] (ISOFORM 1)</scope>
</reference>
<reference key="3">
    <citation type="journal article" date="2004" name="Nat. Genet.">
        <title>Complete sequencing and characterization of 21,243 full-length human cDNAs.</title>
        <authorList>
            <person name="Ota T."/>
            <person name="Suzuki Y."/>
            <person name="Nishikawa T."/>
            <person name="Otsuki T."/>
            <person name="Sugiyama T."/>
            <person name="Irie R."/>
            <person name="Wakamatsu A."/>
            <person name="Hayashi K."/>
            <person name="Sato H."/>
            <person name="Nagai K."/>
            <person name="Kimura K."/>
            <person name="Makita H."/>
            <person name="Sekine M."/>
            <person name="Obayashi M."/>
            <person name="Nishi T."/>
            <person name="Shibahara T."/>
            <person name="Tanaka T."/>
            <person name="Ishii S."/>
            <person name="Yamamoto J."/>
            <person name="Saito K."/>
            <person name="Kawai Y."/>
            <person name="Isono Y."/>
            <person name="Nakamura Y."/>
            <person name="Nagahari K."/>
            <person name="Murakami K."/>
            <person name="Yasuda T."/>
            <person name="Iwayanagi T."/>
            <person name="Wagatsuma M."/>
            <person name="Shiratori A."/>
            <person name="Sudo H."/>
            <person name="Hosoiri T."/>
            <person name="Kaku Y."/>
            <person name="Kodaira H."/>
            <person name="Kondo H."/>
            <person name="Sugawara M."/>
            <person name="Takahashi M."/>
            <person name="Kanda K."/>
            <person name="Yokoi T."/>
            <person name="Furuya T."/>
            <person name="Kikkawa E."/>
            <person name="Omura Y."/>
            <person name="Abe K."/>
            <person name="Kamihara K."/>
            <person name="Katsuta N."/>
            <person name="Sato K."/>
            <person name="Tanikawa M."/>
            <person name="Yamazaki M."/>
            <person name="Ninomiya K."/>
            <person name="Ishibashi T."/>
            <person name="Yamashita H."/>
            <person name="Murakawa K."/>
            <person name="Fujimori K."/>
            <person name="Tanai H."/>
            <person name="Kimata M."/>
            <person name="Watanabe M."/>
            <person name="Hiraoka S."/>
            <person name="Chiba Y."/>
            <person name="Ishida S."/>
            <person name="Ono Y."/>
            <person name="Takiguchi S."/>
            <person name="Watanabe S."/>
            <person name="Yosida M."/>
            <person name="Hotuta T."/>
            <person name="Kusano J."/>
            <person name="Kanehori K."/>
            <person name="Takahashi-Fujii A."/>
            <person name="Hara H."/>
            <person name="Tanase T.-O."/>
            <person name="Nomura Y."/>
            <person name="Togiya S."/>
            <person name="Komai F."/>
            <person name="Hara R."/>
            <person name="Takeuchi K."/>
            <person name="Arita M."/>
            <person name="Imose N."/>
            <person name="Musashino K."/>
            <person name="Yuuki H."/>
            <person name="Oshima A."/>
            <person name="Sasaki N."/>
            <person name="Aotsuka S."/>
            <person name="Yoshikawa Y."/>
            <person name="Matsunawa H."/>
            <person name="Ichihara T."/>
            <person name="Shiohata N."/>
            <person name="Sano S."/>
            <person name="Moriya S."/>
            <person name="Momiyama H."/>
            <person name="Satoh N."/>
            <person name="Takami S."/>
            <person name="Terashima Y."/>
            <person name="Suzuki O."/>
            <person name="Nakagawa S."/>
            <person name="Senoh A."/>
            <person name="Mizoguchi H."/>
            <person name="Goto Y."/>
            <person name="Shimizu F."/>
            <person name="Wakebe H."/>
            <person name="Hishigaki H."/>
            <person name="Watanabe T."/>
            <person name="Sugiyama A."/>
            <person name="Takemoto M."/>
            <person name="Kawakami B."/>
            <person name="Yamazaki M."/>
            <person name="Watanabe K."/>
            <person name="Kumagai A."/>
            <person name="Itakura S."/>
            <person name="Fukuzumi Y."/>
            <person name="Fujimori Y."/>
            <person name="Komiyama M."/>
            <person name="Tashiro H."/>
            <person name="Tanigami A."/>
            <person name="Fujiwara T."/>
            <person name="Ono T."/>
            <person name="Yamada K."/>
            <person name="Fujii Y."/>
            <person name="Ozaki K."/>
            <person name="Hirao M."/>
            <person name="Ohmori Y."/>
            <person name="Kawabata A."/>
            <person name="Hikiji T."/>
            <person name="Kobatake N."/>
            <person name="Inagaki H."/>
            <person name="Ikema Y."/>
            <person name="Okamoto S."/>
            <person name="Okitani R."/>
            <person name="Kawakami T."/>
            <person name="Noguchi S."/>
            <person name="Itoh T."/>
            <person name="Shigeta K."/>
            <person name="Senba T."/>
            <person name="Matsumura K."/>
            <person name="Nakajima Y."/>
            <person name="Mizuno T."/>
            <person name="Morinaga M."/>
            <person name="Sasaki M."/>
            <person name="Togashi T."/>
            <person name="Oyama M."/>
            <person name="Hata H."/>
            <person name="Watanabe M."/>
            <person name="Komatsu T."/>
            <person name="Mizushima-Sugano J."/>
            <person name="Satoh T."/>
            <person name="Shirai Y."/>
            <person name="Takahashi Y."/>
            <person name="Nakagawa K."/>
            <person name="Okumura K."/>
            <person name="Nagase T."/>
            <person name="Nomura N."/>
            <person name="Kikuchi H."/>
            <person name="Masuho Y."/>
            <person name="Yamashita R."/>
            <person name="Nakai K."/>
            <person name="Yada T."/>
            <person name="Nakamura Y."/>
            <person name="Ohara O."/>
            <person name="Isogai T."/>
            <person name="Sugano S."/>
        </authorList>
    </citation>
    <scope>NUCLEOTIDE SEQUENCE [LARGE SCALE MRNA] (ISOFORMS 1 AND 2)</scope>
    <source>
        <tissue>Adrenal gland</tissue>
        <tissue>Teratocarcinoma</tissue>
    </source>
</reference>
<reference key="4">
    <citation type="journal article" date="2003" name="Nature">
        <title>The DNA sequence of human chromosome 7.</title>
        <authorList>
            <person name="Hillier L.W."/>
            <person name="Fulton R.S."/>
            <person name="Fulton L.A."/>
            <person name="Graves T.A."/>
            <person name="Pepin K.H."/>
            <person name="Wagner-McPherson C."/>
            <person name="Layman D."/>
            <person name="Maas J."/>
            <person name="Jaeger S."/>
            <person name="Walker R."/>
            <person name="Wylie K."/>
            <person name="Sekhon M."/>
            <person name="Becker M.C."/>
            <person name="O'Laughlin M.D."/>
            <person name="Schaller M.E."/>
            <person name="Fewell G.A."/>
            <person name="Delehaunty K.D."/>
            <person name="Miner T.L."/>
            <person name="Nash W.E."/>
            <person name="Cordes M."/>
            <person name="Du H."/>
            <person name="Sun H."/>
            <person name="Edwards J."/>
            <person name="Bradshaw-Cordum H."/>
            <person name="Ali J."/>
            <person name="Andrews S."/>
            <person name="Isak A."/>
            <person name="Vanbrunt A."/>
            <person name="Nguyen C."/>
            <person name="Du F."/>
            <person name="Lamar B."/>
            <person name="Courtney L."/>
            <person name="Kalicki J."/>
            <person name="Ozersky P."/>
            <person name="Bielicki L."/>
            <person name="Scott K."/>
            <person name="Holmes A."/>
            <person name="Harkins R."/>
            <person name="Harris A."/>
            <person name="Strong C.M."/>
            <person name="Hou S."/>
            <person name="Tomlinson C."/>
            <person name="Dauphin-Kohlberg S."/>
            <person name="Kozlowicz-Reilly A."/>
            <person name="Leonard S."/>
            <person name="Rohlfing T."/>
            <person name="Rock S.M."/>
            <person name="Tin-Wollam A.-M."/>
            <person name="Abbott A."/>
            <person name="Minx P."/>
            <person name="Maupin R."/>
            <person name="Strowmatt C."/>
            <person name="Latreille P."/>
            <person name="Miller N."/>
            <person name="Johnson D."/>
            <person name="Murray J."/>
            <person name="Woessner J.P."/>
            <person name="Wendl M.C."/>
            <person name="Yang S.-P."/>
            <person name="Schultz B.R."/>
            <person name="Wallis J.W."/>
            <person name="Spieth J."/>
            <person name="Bieri T.A."/>
            <person name="Nelson J.O."/>
            <person name="Berkowicz N."/>
            <person name="Wohldmann P.E."/>
            <person name="Cook L.L."/>
            <person name="Hickenbotham M.T."/>
            <person name="Eldred J."/>
            <person name="Williams D."/>
            <person name="Bedell J.A."/>
            <person name="Mardis E.R."/>
            <person name="Clifton S.W."/>
            <person name="Chissoe S.L."/>
            <person name="Marra M.A."/>
            <person name="Raymond C."/>
            <person name="Haugen E."/>
            <person name="Gillett W."/>
            <person name="Zhou Y."/>
            <person name="James R."/>
            <person name="Phelps K."/>
            <person name="Iadanoto S."/>
            <person name="Bubb K."/>
            <person name="Simms E."/>
            <person name="Levy R."/>
            <person name="Clendenning J."/>
            <person name="Kaul R."/>
            <person name="Kent W.J."/>
            <person name="Furey T.S."/>
            <person name="Baertsch R.A."/>
            <person name="Brent M.R."/>
            <person name="Keibler E."/>
            <person name="Flicek P."/>
            <person name="Bork P."/>
            <person name="Suyama M."/>
            <person name="Bailey J.A."/>
            <person name="Portnoy M.E."/>
            <person name="Torrents D."/>
            <person name="Chinwalla A.T."/>
            <person name="Gish W.R."/>
            <person name="Eddy S.R."/>
            <person name="McPherson J.D."/>
            <person name="Olson M.V."/>
            <person name="Eichler E.E."/>
            <person name="Green E.D."/>
            <person name="Waterston R.H."/>
            <person name="Wilson R.K."/>
        </authorList>
    </citation>
    <scope>NUCLEOTIDE SEQUENCE [LARGE SCALE GENOMIC DNA]</scope>
</reference>
<reference key="5">
    <citation type="journal article" date="2003" name="Science">
        <title>Human chromosome 7: DNA sequence and biology.</title>
        <authorList>
            <person name="Scherer S.W."/>
            <person name="Cheung J."/>
            <person name="MacDonald J.R."/>
            <person name="Osborne L.R."/>
            <person name="Nakabayashi K."/>
            <person name="Herbrick J.-A."/>
            <person name="Carson A.R."/>
            <person name="Parker-Katiraee L."/>
            <person name="Skaug J."/>
            <person name="Khaja R."/>
            <person name="Zhang J."/>
            <person name="Hudek A.K."/>
            <person name="Li M."/>
            <person name="Haddad M."/>
            <person name="Duggan G.E."/>
            <person name="Fernandez B.A."/>
            <person name="Kanematsu E."/>
            <person name="Gentles S."/>
            <person name="Christopoulos C.C."/>
            <person name="Choufani S."/>
            <person name="Kwasnicka D."/>
            <person name="Zheng X.H."/>
            <person name="Lai Z."/>
            <person name="Nusskern D.R."/>
            <person name="Zhang Q."/>
            <person name="Gu Z."/>
            <person name="Lu F."/>
            <person name="Zeesman S."/>
            <person name="Nowaczyk M.J."/>
            <person name="Teshima I."/>
            <person name="Chitayat D."/>
            <person name="Shuman C."/>
            <person name="Weksberg R."/>
            <person name="Zackai E.H."/>
            <person name="Grebe T.A."/>
            <person name="Cox S.R."/>
            <person name="Kirkpatrick S.J."/>
            <person name="Rahman N."/>
            <person name="Friedman J.M."/>
            <person name="Heng H.H.Q."/>
            <person name="Pelicci P.G."/>
            <person name="Lo-Coco F."/>
            <person name="Belloni E."/>
            <person name="Shaffer L.G."/>
            <person name="Pober B."/>
            <person name="Morton C.C."/>
            <person name="Gusella J.F."/>
            <person name="Bruns G.A.P."/>
            <person name="Korf B.R."/>
            <person name="Quade B.J."/>
            <person name="Ligon A.H."/>
            <person name="Ferguson H."/>
            <person name="Higgins A.W."/>
            <person name="Leach N.T."/>
            <person name="Herrick S.R."/>
            <person name="Lemyre E."/>
            <person name="Farra C.G."/>
            <person name="Kim H.-G."/>
            <person name="Summers A.M."/>
            <person name="Gripp K.W."/>
            <person name="Roberts W."/>
            <person name="Szatmari P."/>
            <person name="Winsor E.J.T."/>
            <person name="Grzeschik K.-H."/>
            <person name="Teebi A."/>
            <person name="Minassian B.A."/>
            <person name="Kere J."/>
            <person name="Armengol L."/>
            <person name="Pujana M.A."/>
            <person name="Estivill X."/>
            <person name="Wilson M.D."/>
            <person name="Koop B.F."/>
            <person name="Tosi S."/>
            <person name="Moore G.E."/>
            <person name="Boright A.P."/>
            <person name="Zlotorynski E."/>
            <person name="Kerem B."/>
            <person name="Kroisel P.M."/>
            <person name="Petek E."/>
            <person name="Oscier D.G."/>
            <person name="Mould S.J."/>
            <person name="Doehner H."/>
            <person name="Doehner K."/>
            <person name="Rommens J.M."/>
            <person name="Vincent J.B."/>
            <person name="Venter J.C."/>
            <person name="Li P.W."/>
            <person name="Mural R.J."/>
            <person name="Adams M.D."/>
            <person name="Tsui L.-C."/>
        </authorList>
    </citation>
    <scope>NUCLEOTIDE SEQUENCE [LARGE SCALE GENOMIC DNA]</scope>
</reference>
<reference key="6">
    <citation type="journal article" date="2004" name="Genome Res.">
        <title>The status, quality, and expansion of the NIH full-length cDNA project: the Mammalian Gene Collection (MGC).</title>
        <authorList>
            <consortium name="The MGC Project Team"/>
        </authorList>
    </citation>
    <scope>NUCLEOTIDE SEQUENCE [LARGE SCALE MRNA] (ISOFORM 1)</scope>
    <scope>VARIANT SER-57</scope>
    <source>
        <tissue>Brain</tissue>
    </source>
</reference>
<reference key="7">
    <citation type="journal article" date="2009" name="FASEB J.">
        <title>Tetraspanin12 regulates ADAM10-dependent cleavage of amyloid precursor protein.</title>
        <authorList>
            <person name="Xu D."/>
            <person name="Sharma C."/>
            <person name="Hemler M.E."/>
        </authorList>
    </citation>
    <scope>FUNCTION</scope>
    <scope>INTERACTION WITH ADAM10</scope>
    <scope>PALMITOYLATION</scope>
    <scope>MUTAGENESIS OF CYS-9; CYS-12 AND CYS-83</scope>
</reference>
<reference key="8">
    <citation type="journal article" date="2009" name="Mol. Biol. Cell">
        <title>Tetraspanin proteins regulate membrane type-1 matrix metalloproteinase-dependent pericellular proteolysis.</title>
        <authorList>
            <person name="Lafleur M.A."/>
            <person name="Xu D."/>
            <person name="Hemler M.E."/>
        </authorList>
    </citation>
    <scope>FUNCTION</scope>
</reference>
<reference key="9">
    <citation type="journal article" date="2010" name="Am. J. Hum. Genet.">
        <title>Next-generation sequencing of a 40 Mb linkage interval reveals TSPAN12 mutations in patients with familial exudative vitreoretinopathy.</title>
        <authorList>
            <person name="Nikopoulos K."/>
            <person name="Gilissen C."/>
            <person name="Hoischen A."/>
            <person name="van Nouhuys C.E."/>
            <person name="Boonstra F.N."/>
            <person name="Blokland E.A."/>
            <person name="Arts P."/>
            <person name="Wieskamp N."/>
            <person name="Strom T.M."/>
            <person name="Ayuso C."/>
            <person name="Tilanus M.A."/>
            <person name="Bouwhuis S."/>
            <person name="Mukhopadhyay A."/>
            <person name="Scheffer H."/>
            <person name="Hoefsloot L.H."/>
            <person name="Veltman J.A."/>
            <person name="Cremers F.P."/>
            <person name="Collin R.W."/>
        </authorList>
    </citation>
    <scope>VARIANTS EVR5 ARG-188 AND PRO-237</scope>
</reference>
<reference key="10">
    <citation type="journal article" date="2010" name="Am. J. Hum. Genet.">
        <title>Mutations in TSPAN12 cause autosomal-dominant familial exudative vitreoretinopathy.</title>
        <authorList>
            <person name="Poulter J.A."/>
            <person name="Ali M."/>
            <person name="Gilmour D.F."/>
            <person name="Rice A."/>
            <person name="Kondo H."/>
            <person name="Hayashi K."/>
            <person name="Mackey D.A."/>
            <person name="Kearns L.S."/>
            <person name="Ruddle J.B."/>
            <person name="Craig J.E."/>
            <person name="Pierce E.A."/>
            <person name="Downey L.M."/>
            <person name="Mohamed M.D."/>
            <person name="Markham A.F."/>
            <person name="Inglehearn C.F."/>
            <person name="Toomes C."/>
        </authorList>
    </citation>
    <scope>VARIANTS EVR5 HIS-101 AND ARG-210</scope>
</reference>
<reference key="11">
    <citation type="journal article" date="2012" name="Invest. Ophthalmol. Vis. Sci.">
        <title>Recessive mutations in TSPAN12 cause retinal dysplasia and severe familial exudative vitreoretinopathy (FEVR).</title>
        <authorList>
            <person name="Poulter J.A."/>
            <person name="Davidson A.E."/>
            <person name="Ali M."/>
            <person name="Gilmour D.F."/>
            <person name="Parry D.A."/>
            <person name="Mintz-Hittner H.A."/>
            <person name="Carr I.M."/>
            <person name="Bottomley H.M."/>
            <person name="Long V.W."/>
            <person name="Downey L.M."/>
            <person name="Sergouniotis P.I."/>
            <person name="Wright G.A."/>
            <person name="MacLaren R.E."/>
            <person name="Moore A.T."/>
            <person name="Webster A.R."/>
            <person name="Inglehearn C.F."/>
            <person name="Toomes C."/>
        </authorList>
    </citation>
    <scope>VARIANTS EVR5 MET-49; CYS-138 AND PRO-223</scope>
</reference>
<comment type="function">
    <text evidence="1 4 5">Regulator of cell surface receptor signal transduction. Plays a central role in retinal vascularization by regulating norrin (NDP) signal transduction. Acts in concert with norrin (NDP) to promote FZD4 multimerization and subsequent activation of FZD4, leading to promote accumulation of beta-catenin (CTNNB1) and stimulate LEF/TCF-mediated transcriptional programs. Suprisingly, it only activates the norrin (NDP)-dependent activation of FZD4, while it does not activate the Wnt-dependent activation of FZD4, suggesting the existence of a Wnt-independent signaling that also promote accumulation the beta-catenin (CTNNB1) (By similarity). Acts as a regulator of membrane proteinases such as ADAM10 and MMP14/MT1-MMP. Activates ADAM10-dependent cleavage activity of amyloid precursor protein (APP). Activates MMP14/MT1-MMP-dependent cleavage activity.</text>
</comment>
<comment type="subunit">
    <text evidence="1 5">Component of a complex, at least composed of TSPAN12, FZD4 and norrin (NDP) (By similarity). Interacts (when palmitoylated) with ADAM10. Interacts with MMP14/MT1-MMP.</text>
</comment>
<comment type="interaction">
    <interactant intactId="EBI-2466403">
        <id>O95859</id>
    </interactant>
    <interactant intactId="EBI-1536151">
        <id>O14672</id>
        <label>ADAM10</label>
    </interactant>
    <organismsDiffer>false</organismsDiffer>
    <experiments>2</experiments>
</comment>
<comment type="interaction">
    <interactant intactId="EBI-2466403">
        <id>O95859</id>
    </interactant>
    <interactant intactId="EBI-21222747">
        <id>PRO_0000029067</id>
        <label>ADAM10</label>
        <dbReference type="UniProtKB" id="O14672"/>
    </interactant>
    <organismsDiffer>false</organismsDiffer>
    <experiments>2</experiments>
</comment>
<comment type="interaction">
    <interactant intactId="EBI-2466403">
        <id>O95859</id>
    </interactant>
    <interactant intactId="EBI-3913685">
        <id>O95674</id>
        <label>CDS2</label>
    </interactant>
    <organismsDiffer>false</organismsDiffer>
    <experiments>3</experiments>
</comment>
<comment type="interaction">
    <interactant intactId="EBI-2466403">
        <id>O95859</id>
    </interactant>
    <interactant intactId="EBI-12019274">
        <id>Q4LDR2</id>
        <label>CTXN3</label>
    </interactant>
    <organismsDiffer>false</organismsDiffer>
    <experiments>3</experiments>
</comment>
<comment type="interaction">
    <interactant intactId="EBI-2466403">
        <id>O95859</id>
    </interactant>
    <interactant intactId="EBI-2680384">
        <id>Q9BQA9</id>
        <label>CYBC1</label>
    </interactant>
    <organismsDiffer>false</organismsDiffer>
    <experiments>3</experiments>
</comment>
<comment type="interaction">
    <interactant intactId="EBI-2466403">
        <id>O95859</id>
    </interactant>
    <interactant intactId="EBI-3907816">
        <id>P54852</id>
        <label>EMP3</label>
    </interactant>
    <organismsDiffer>false</organismsDiffer>
    <experiments>3</experiments>
</comment>
<comment type="interaction">
    <interactant intactId="EBI-2466403">
        <id>O95859</id>
    </interactant>
    <interactant intactId="EBI-10178951">
        <id>O00155</id>
        <label>GPR25</label>
    </interactant>
    <organismsDiffer>false</organismsDiffer>
    <experiments>3</experiments>
</comment>
<comment type="interaction">
    <interactant intactId="EBI-2466403">
        <id>O95859</id>
    </interactant>
    <interactant intactId="EBI-2927498">
        <id>O60883</id>
        <label>GPR37L1</label>
    </interactant>
    <organismsDiffer>false</organismsDiffer>
    <experiments>3</experiments>
</comment>
<comment type="interaction">
    <interactant intactId="EBI-2466403">
        <id>O95859</id>
    </interactant>
    <interactant intactId="EBI-720480">
        <id>P24593</id>
        <label>IGFBP5</label>
    </interactant>
    <organismsDiffer>false</organismsDiffer>
    <experiments>3</experiments>
</comment>
<comment type="interaction">
    <interactant intactId="EBI-2466403">
        <id>O95859</id>
    </interactant>
    <interactant intactId="EBI-10317612">
        <id>Q9P0N8</id>
        <label>MARCHF2</label>
    </interactant>
    <organismsDiffer>false</organismsDiffer>
    <experiments>3</experiments>
</comment>
<comment type="interaction">
    <interactant intactId="EBI-2466403">
        <id>O95859</id>
    </interactant>
    <interactant intactId="EBI-724754">
        <id>O14880</id>
        <label>MGST3</label>
    </interactant>
    <organismsDiffer>false</organismsDiffer>
    <experiments>3</experiments>
</comment>
<comment type="interaction">
    <interactant intactId="EBI-2466403">
        <id>O95859</id>
    </interactant>
    <interactant intactId="EBI-10317425">
        <id>Q9NZG7</id>
        <label>NINJ2</label>
    </interactant>
    <organismsDiffer>false</organismsDiffer>
    <experiments>3</experiments>
</comment>
<comment type="interaction">
    <interactant intactId="EBI-2466403">
        <id>O95859</id>
    </interactant>
    <interactant intactId="EBI-2845982">
        <id>Q01453</id>
        <label>PMP22</label>
    </interactant>
    <organismsDiffer>false</organismsDiffer>
    <experiments>3</experiments>
</comment>
<comment type="interaction">
    <interactant intactId="EBI-2466403">
        <id>O95859</id>
    </interactant>
    <interactant intactId="EBI-6269616">
        <id>Q96AA3</id>
        <label>RFT1</label>
    </interactant>
    <organismsDiffer>false</organismsDiffer>
    <experiments>3</experiments>
</comment>
<comment type="interaction">
    <interactant intactId="EBI-2466403">
        <id>O95859</id>
    </interactant>
    <interactant intactId="EBI-2129725">
        <id>Q8N8N0</id>
        <label>RNF152</label>
    </interactant>
    <organismsDiffer>false</organismsDiffer>
    <experiments>3</experiments>
</comment>
<comment type="interaction">
    <interactant intactId="EBI-2466403">
        <id>O95859</id>
    </interactant>
    <interactant intactId="EBI-727240">
        <id>Q9UNK0</id>
        <label>STX8</label>
    </interactant>
    <organismsDiffer>false</organismsDiffer>
    <experiments>3</experiments>
</comment>
<comment type="interaction">
    <interactant intactId="EBI-2466403">
        <id>O95859</id>
    </interactant>
    <interactant intactId="EBI-10329860">
        <id>Q9Y6I9</id>
        <label>TEX264</label>
    </interactant>
    <organismsDiffer>false</organismsDiffer>
    <experiments>3</experiments>
</comment>
<comment type="interaction">
    <interactant intactId="EBI-2466403">
        <id>O95859</id>
    </interactant>
    <interactant intactId="EBI-717422">
        <id>Q12800</id>
        <label>TFCP2</label>
    </interactant>
    <organismsDiffer>false</organismsDiffer>
    <experiments>3</experiments>
</comment>
<comment type="interaction">
    <interactant intactId="EBI-2466403">
        <id>O95859</id>
    </interactant>
    <interactant intactId="EBI-2844246">
        <id>Q9NV12</id>
        <label>TMEM140</label>
    </interactant>
    <organismsDiffer>false</organismsDiffer>
    <experiments>3</experiments>
</comment>
<comment type="interaction">
    <interactant intactId="EBI-2466403">
        <id>O95859</id>
    </interactant>
    <interactant intactId="EBI-348587">
        <id>Q9BVK8</id>
        <label>TMEM147</label>
    </interactant>
    <organismsDiffer>false</organismsDiffer>
    <experiments>3</experiments>
</comment>
<comment type="interaction">
    <interactant intactId="EBI-2466403">
        <id>O95859</id>
    </interactant>
    <interactant intactId="EBI-10255122">
        <id>Q6ZP80</id>
        <label>TMEM182</label>
    </interactant>
    <organismsDiffer>false</organismsDiffer>
    <experiments>3</experiments>
</comment>
<comment type="interaction">
    <interactant intactId="EBI-2466403">
        <id>O95859</id>
    </interactant>
    <interactant intactId="EBI-10173151">
        <id>A2RU14</id>
        <label>TMEM218</label>
    </interactant>
    <organismsDiffer>false</organismsDiffer>
    <experiments>3</experiments>
</comment>
<comment type="subcellular location">
    <subcellularLocation>
        <location evidence="1">Cell membrane</location>
        <topology evidence="1">Multi-pass membrane protein</topology>
    </subcellularLocation>
</comment>
<comment type="alternative products">
    <event type="alternative splicing"/>
    <isoform>
        <id>O95859-1</id>
        <name>1</name>
        <sequence type="displayed"/>
    </isoform>
    <isoform>
        <id>O95859-2</id>
        <name>2</name>
        <sequence type="described" ref="VSP_038525"/>
    </isoform>
</comment>
<comment type="PTM">
    <text evidence="5">Palmitoylated; required for interaction with ADAM10. The precise position of palmitoylated residues is unclear and occurs either on Cys-9, Cys-12 and/or Cys-83.</text>
</comment>
<comment type="disease" evidence="6 7 8">
    <disease id="DI-02686">
        <name>Vitreoretinopathy, exudative 5</name>
        <acronym>EVR5</acronym>
        <description>A disorder of the retinal vasculature characterized by an abrupt cessation of growth of peripheral capillaries, leading to an avascular peripheral retina. This may lead to compensatory retinal neovascularization, which is thought to be induced by hypoxia from the initial avascular insult. New vessels are prone to leakage and rupture causing exudates and bleeding, followed by scarring, retinal detachment and blindness. Clinical features can be highly variable, even within the same family. Patients with mild forms of the disease are asymptomatic, and their only disease related abnormality is an arc of avascular retina in the extreme temporal periphery.</description>
        <dbReference type="MIM" id="613310"/>
    </disease>
    <text evidence="8">The disease is caused by variants affecting the gene represented in this entry. TSPAN12 dominant and recessive mutations have been identified in patients with exudative vitreoretinopathy. Patients with mutations in both alleles of TSPAN12 have severe exudative vitreoretinopathy or retinal dysplasia. These mutations appear to result in a milder phenotype in heterozygous mutation carriers (PubMed:22427576).</text>
</comment>
<comment type="similarity">
    <text evidence="10">Belongs to the tetraspanin (TM4SF) family.</text>
</comment>
<organism>
    <name type="scientific">Homo sapiens</name>
    <name type="common">Human</name>
    <dbReference type="NCBI Taxonomy" id="9606"/>
    <lineage>
        <taxon>Eukaryota</taxon>
        <taxon>Metazoa</taxon>
        <taxon>Chordata</taxon>
        <taxon>Craniata</taxon>
        <taxon>Vertebrata</taxon>
        <taxon>Euteleostomi</taxon>
        <taxon>Mammalia</taxon>
        <taxon>Eutheria</taxon>
        <taxon>Euarchontoglires</taxon>
        <taxon>Primates</taxon>
        <taxon>Haplorrhini</taxon>
        <taxon>Catarrhini</taxon>
        <taxon>Hominidae</taxon>
        <taxon>Homo</taxon>
    </lineage>
</organism>
<name>TSN12_HUMAN</name>
<sequence length="305" mass="35383">MAREDSVKCLRCLLYALNLLFWLMSISVLAVSAWMRDYLNNVLTLTAETRVEEAVILTYFPVVHPVMIAVCCFLIIVGMLGYCGTVKRNLLLLAWYFGSLLVIFCVELACGVWTYEQELMVPVQWSDMVTLKARMTNYGLPRYRWLTHAWNFFQREFKCCGVVYFTDWLEMTEMDWPPDSCCVREFPGCSKQAHQEDLSDLYQEGCGKKMYSFLRGTKQLQVLRFLGISIGVTQILAMILTITLLWALYYDRREPGTDQMMSLKNDNSQHLSCPSVELLKPSLSRIFEHTSMANSFNTHFEMEEL</sequence>
<evidence type="ECO:0000250" key="1"/>
<evidence type="ECO:0000255" key="2"/>
<evidence type="ECO:0000269" key="3">
    <source>
    </source>
</evidence>
<evidence type="ECO:0000269" key="4">
    <source>
    </source>
</evidence>
<evidence type="ECO:0000269" key="5">
    <source>
    </source>
</evidence>
<evidence type="ECO:0000269" key="6">
    <source>
    </source>
</evidence>
<evidence type="ECO:0000269" key="7">
    <source>
    </source>
</evidence>
<evidence type="ECO:0000269" key="8">
    <source>
    </source>
</evidence>
<evidence type="ECO:0000303" key="9">
    <source>
    </source>
</evidence>
<evidence type="ECO:0000305" key="10"/>
<dbReference type="EMBL" id="AF124522">
    <property type="protein sequence ID" value="AAD17317.1"/>
    <property type="molecule type" value="mRNA"/>
</dbReference>
<dbReference type="EMBL" id="AY358703">
    <property type="protein sequence ID" value="AAQ89066.1"/>
    <property type="molecule type" value="mRNA"/>
</dbReference>
<dbReference type="EMBL" id="AK299247">
    <property type="protein sequence ID" value="BAG61278.1"/>
    <property type="molecule type" value="mRNA"/>
</dbReference>
<dbReference type="EMBL" id="AK312239">
    <property type="protein sequence ID" value="BAG35172.1"/>
    <property type="molecule type" value="mRNA"/>
</dbReference>
<dbReference type="EMBL" id="AC004456">
    <property type="protein sequence ID" value="AAQ96879.1"/>
    <property type="molecule type" value="Genomic_DNA"/>
</dbReference>
<dbReference type="EMBL" id="CH236947">
    <property type="protein sequence ID" value="EAL24349.1"/>
    <property type="molecule type" value="Genomic_DNA"/>
</dbReference>
<dbReference type="EMBL" id="BC031265">
    <property type="protein sequence ID" value="AAH31265.1"/>
    <property type="molecule type" value="mRNA"/>
</dbReference>
<dbReference type="CCDS" id="CCDS5777.1">
    <molecule id="O95859-1"/>
</dbReference>
<dbReference type="RefSeq" id="NP_036470.1">
    <molecule id="O95859-1"/>
    <property type="nucleotide sequence ID" value="NM_012338.4"/>
</dbReference>
<dbReference type="RefSeq" id="XP_005250296.1">
    <molecule id="O95859-1"/>
    <property type="nucleotide sequence ID" value="XM_005250239.4"/>
</dbReference>
<dbReference type="RefSeq" id="XP_011514295.1">
    <property type="nucleotide sequence ID" value="XM_011515993.1"/>
</dbReference>
<dbReference type="RefSeq" id="XP_011514296.1">
    <property type="nucleotide sequence ID" value="XM_011515994.1"/>
</dbReference>
<dbReference type="RefSeq" id="XP_016867401.1">
    <property type="nucleotide sequence ID" value="XM_017011912.1"/>
</dbReference>
<dbReference type="RefSeq" id="XP_047276051.1">
    <molecule id="O95859-1"/>
    <property type="nucleotide sequence ID" value="XM_047420095.1"/>
</dbReference>
<dbReference type="RefSeq" id="XP_054213691.1">
    <molecule id="O95859-1"/>
    <property type="nucleotide sequence ID" value="XM_054357716.1"/>
</dbReference>
<dbReference type="RefSeq" id="XP_054213692.1">
    <molecule id="O95859-1"/>
    <property type="nucleotide sequence ID" value="XM_054357717.1"/>
</dbReference>
<dbReference type="RefSeq" id="XP_054213693.1">
    <molecule id="O95859-1"/>
    <property type="nucleotide sequence ID" value="XM_054357718.1"/>
</dbReference>
<dbReference type="RefSeq" id="XP_054213694.1">
    <molecule id="O95859-1"/>
    <property type="nucleotide sequence ID" value="XM_054357719.1"/>
</dbReference>
<dbReference type="RefSeq" id="XP_054213695.1">
    <molecule id="O95859-1"/>
    <property type="nucleotide sequence ID" value="XM_054357720.1"/>
</dbReference>
<dbReference type="RefSeq" id="XP_054213696.1">
    <molecule id="O95859-1"/>
    <property type="nucleotide sequence ID" value="XM_054357721.1"/>
</dbReference>
<dbReference type="RefSeq" id="XP_054213697.1">
    <molecule id="O95859-1"/>
    <property type="nucleotide sequence ID" value="XM_054357722.1"/>
</dbReference>
<dbReference type="BioGRID" id="117098">
    <property type="interactions" value="21"/>
</dbReference>
<dbReference type="CORUM" id="O95859"/>
<dbReference type="FunCoup" id="O95859">
    <property type="interactions" value="579"/>
</dbReference>
<dbReference type="IntAct" id="O95859">
    <property type="interactions" value="37"/>
</dbReference>
<dbReference type="STRING" id="9606.ENSP00000222747"/>
<dbReference type="TCDB" id="8.A.40.1.20">
    <property type="family name" value="the tetraspanin (tetraspanin) family"/>
</dbReference>
<dbReference type="iPTMnet" id="O95859"/>
<dbReference type="PhosphoSitePlus" id="O95859"/>
<dbReference type="SwissPalm" id="O95859"/>
<dbReference type="BioMuta" id="TSPAN12"/>
<dbReference type="jPOST" id="O95859"/>
<dbReference type="MassIVE" id="O95859"/>
<dbReference type="PaxDb" id="9606-ENSP00000222747"/>
<dbReference type="PeptideAtlas" id="O95859"/>
<dbReference type="ProteomicsDB" id="51092">
    <molecule id="O95859-1"/>
</dbReference>
<dbReference type="ProteomicsDB" id="51093">
    <molecule id="O95859-2"/>
</dbReference>
<dbReference type="Antibodypedia" id="31686">
    <property type="antibodies" value="190 antibodies from 28 providers"/>
</dbReference>
<dbReference type="DNASU" id="23554"/>
<dbReference type="Ensembl" id="ENST00000222747.8">
    <molecule id="O95859-1"/>
    <property type="protein sequence ID" value="ENSP00000222747.3"/>
    <property type="gene ID" value="ENSG00000106025.9"/>
</dbReference>
<dbReference type="Ensembl" id="ENST00000415871.5">
    <molecule id="O95859-1"/>
    <property type="protein sequence ID" value="ENSP00000397699.1"/>
    <property type="gene ID" value="ENSG00000106025.9"/>
</dbReference>
<dbReference type="GeneID" id="23554"/>
<dbReference type="KEGG" id="hsa:23554"/>
<dbReference type="MANE-Select" id="ENST00000222747.8">
    <property type="protein sequence ID" value="ENSP00000222747.3"/>
    <property type="RefSeq nucleotide sequence ID" value="NM_012338.4"/>
    <property type="RefSeq protein sequence ID" value="NP_036470.1"/>
</dbReference>
<dbReference type="UCSC" id="uc003vjk.4">
    <molecule id="O95859-1"/>
    <property type="organism name" value="human"/>
</dbReference>
<dbReference type="AGR" id="HGNC:21641"/>
<dbReference type="CTD" id="23554"/>
<dbReference type="DisGeNET" id="23554"/>
<dbReference type="GeneCards" id="TSPAN12"/>
<dbReference type="HGNC" id="HGNC:21641">
    <property type="gene designation" value="TSPAN12"/>
</dbReference>
<dbReference type="HPA" id="ENSG00000106025">
    <property type="expression patterns" value="Tissue enhanced (kidney)"/>
</dbReference>
<dbReference type="MalaCards" id="TSPAN12"/>
<dbReference type="MIM" id="613138">
    <property type="type" value="gene"/>
</dbReference>
<dbReference type="MIM" id="613310">
    <property type="type" value="phenotype"/>
</dbReference>
<dbReference type="neXtProt" id="NX_O95859"/>
<dbReference type="OpenTargets" id="ENSG00000106025"/>
<dbReference type="Orphanet" id="891">
    <property type="disease" value="Familial exudative vitreoretinopathy"/>
</dbReference>
<dbReference type="PharmGKB" id="PA134954047"/>
<dbReference type="VEuPathDB" id="HostDB:ENSG00000106025"/>
<dbReference type="eggNOG" id="KOG3882">
    <property type="taxonomic scope" value="Eukaryota"/>
</dbReference>
<dbReference type="GeneTree" id="ENSGT00510000047764"/>
<dbReference type="HOGENOM" id="CLU_055524_1_0_1"/>
<dbReference type="InParanoid" id="O95859"/>
<dbReference type="OMA" id="CARHAHF"/>
<dbReference type="OrthoDB" id="8813994at2759"/>
<dbReference type="PAN-GO" id="O95859">
    <property type="GO annotations" value="2 GO annotations based on evolutionary models"/>
</dbReference>
<dbReference type="PhylomeDB" id="O95859"/>
<dbReference type="TreeFam" id="TF316345"/>
<dbReference type="PathwayCommons" id="O95859"/>
<dbReference type="SignaLink" id="O95859"/>
<dbReference type="SIGNOR" id="O95859"/>
<dbReference type="BioGRID-ORCS" id="23554">
    <property type="hits" value="15 hits in 1150 CRISPR screens"/>
</dbReference>
<dbReference type="ChiTaRS" id="TSPAN12">
    <property type="organism name" value="human"/>
</dbReference>
<dbReference type="GeneWiki" id="TSPAN12"/>
<dbReference type="GenomeRNAi" id="23554"/>
<dbReference type="Pharos" id="O95859">
    <property type="development level" value="Tbio"/>
</dbReference>
<dbReference type="PRO" id="PR:O95859"/>
<dbReference type="Proteomes" id="UP000005640">
    <property type="component" value="Chromosome 7"/>
</dbReference>
<dbReference type="RNAct" id="O95859">
    <property type="molecule type" value="protein"/>
</dbReference>
<dbReference type="Bgee" id="ENSG00000106025">
    <property type="expression patterns" value="Expressed in oocyte and 189 other cell types or tissues"/>
</dbReference>
<dbReference type="ExpressionAtlas" id="O95859">
    <property type="expression patterns" value="baseline and differential"/>
</dbReference>
<dbReference type="GO" id="GO:0016020">
    <property type="term" value="C:membrane"/>
    <property type="evidence" value="ECO:0000304"/>
    <property type="project" value="ProtInc"/>
</dbReference>
<dbReference type="GO" id="GO:0005886">
    <property type="term" value="C:plasma membrane"/>
    <property type="evidence" value="ECO:0000250"/>
    <property type="project" value="UniProtKB"/>
</dbReference>
<dbReference type="GO" id="GO:0001525">
    <property type="term" value="P:angiogenesis"/>
    <property type="evidence" value="ECO:0007669"/>
    <property type="project" value="UniProtKB-KW"/>
</dbReference>
<dbReference type="GO" id="GO:0007166">
    <property type="term" value="P:cell surface receptor signaling pathway"/>
    <property type="evidence" value="ECO:0000250"/>
    <property type="project" value="UniProtKB"/>
</dbReference>
<dbReference type="GO" id="GO:0035633">
    <property type="term" value="P:maintenance of blood-brain barrier"/>
    <property type="evidence" value="ECO:0007669"/>
    <property type="project" value="Ensembl"/>
</dbReference>
<dbReference type="GO" id="GO:0110135">
    <property type="term" value="P:Norrin signaling pathway"/>
    <property type="evidence" value="ECO:0007669"/>
    <property type="project" value="Ensembl"/>
</dbReference>
<dbReference type="GO" id="GO:0045765">
    <property type="term" value="P:regulation of angiogenesis"/>
    <property type="evidence" value="ECO:0000250"/>
    <property type="project" value="UniProtKB"/>
</dbReference>
<dbReference type="GO" id="GO:0010842">
    <property type="term" value="P:retina layer formation"/>
    <property type="evidence" value="ECO:0000250"/>
    <property type="project" value="UniProtKB"/>
</dbReference>
<dbReference type="CDD" id="cd03157">
    <property type="entry name" value="TM4SF12_like_LEL"/>
    <property type="match status" value="1"/>
</dbReference>
<dbReference type="FunFam" id="1.10.1450.10:FF:000009">
    <property type="entry name" value="Tetraspanin"/>
    <property type="match status" value="1"/>
</dbReference>
<dbReference type="Gene3D" id="1.10.1450.10">
    <property type="entry name" value="Tetraspanin"/>
    <property type="match status" value="1"/>
</dbReference>
<dbReference type="InterPro" id="IPR018499">
    <property type="entry name" value="Tetraspanin/Peripherin"/>
</dbReference>
<dbReference type="InterPro" id="IPR000301">
    <property type="entry name" value="Tetraspanin_animals"/>
</dbReference>
<dbReference type="InterPro" id="IPR018503">
    <property type="entry name" value="Tetraspanin_CS"/>
</dbReference>
<dbReference type="InterPro" id="IPR008952">
    <property type="entry name" value="Tetraspanin_EC2_sf"/>
</dbReference>
<dbReference type="PANTHER" id="PTHR19282">
    <property type="entry name" value="TETRASPANIN"/>
    <property type="match status" value="1"/>
</dbReference>
<dbReference type="PANTHER" id="PTHR19282:SF462">
    <property type="entry name" value="TETRASPANIN-12"/>
    <property type="match status" value="1"/>
</dbReference>
<dbReference type="Pfam" id="PF00335">
    <property type="entry name" value="Tetraspanin"/>
    <property type="match status" value="1"/>
</dbReference>
<dbReference type="PIRSF" id="PIRSF002419">
    <property type="entry name" value="Tetraspanin"/>
    <property type="match status" value="1"/>
</dbReference>
<dbReference type="PRINTS" id="PR00259">
    <property type="entry name" value="TMFOUR"/>
</dbReference>
<dbReference type="SUPFAM" id="SSF48652">
    <property type="entry name" value="Tetraspanin"/>
    <property type="match status" value="1"/>
</dbReference>
<dbReference type="PROSITE" id="PS00421">
    <property type="entry name" value="TM4_1"/>
    <property type="match status" value="1"/>
</dbReference>
<gene>
    <name type="primary">TSPAN12</name>
    <name type="synonym">NET2</name>
    <name type="synonym">TM4SF12</name>
    <name type="ORF">UNQ774/PRO1568</name>
</gene>